<keyword id="KW-0343">GTPase activation</keyword>
<keyword id="KW-1185">Reference proteome</keyword>
<dbReference type="EMBL" id="AC005275">
    <property type="protein sequence ID" value="AAD14438.1"/>
    <property type="status" value="ALT_INIT"/>
    <property type="molecule type" value="Genomic_DNA"/>
</dbReference>
<dbReference type="EMBL" id="AF069442">
    <property type="protein sequence ID" value="AAC79102.1"/>
    <property type="status" value="ALT_INIT"/>
    <property type="molecule type" value="Genomic_DNA"/>
</dbReference>
<dbReference type="EMBL" id="AL161496">
    <property type="protein sequence ID" value="CAB77795.1"/>
    <property type="status" value="ALT_INIT"/>
    <property type="molecule type" value="Genomic_DNA"/>
</dbReference>
<dbReference type="EMBL" id="CP002687">
    <property type="protein sequence ID" value="AEE82271.1"/>
    <property type="molecule type" value="Genomic_DNA"/>
</dbReference>
<dbReference type="EMBL" id="BX826644">
    <property type="status" value="NOT_ANNOTATED_CDS"/>
    <property type="molecule type" value="mRNA"/>
</dbReference>
<dbReference type="PIR" id="T01383">
    <property type="entry name" value="T01383"/>
</dbReference>
<dbReference type="RefSeq" id="NP_192219.2">
    <property type="nucleotide sequence ID" value="NM_116544.4"/>
</dbReference>
<dbReference type="SMR" id="F4JI46"/>
<dbReference type="BioGRID" id="13383">
    <property type="interactions" value="1"/>
</dbReference>
<dbReference type="FunCoup" id="F4JI46">
    <property type="interactions" value="622"/>
</dbReference>
<dbReference type="STRING" id="3702.F4JI46"/>
<dbReference type="iPTMnet" id="F4JI46"/>
<dbReference type="PaxDb" id="3702-AT4G03100.1"/>
<dbReference type="ProteomicsDB" id="236167"/>
<dbReference type="EnsemblPlants" id="AT4G03100.1">
    <property type="protein sequence ID" value="AT4G03100.1"/>
    <property type="gene ID" value="AT4G03100"/>
</dbReference>
<dbReference type="GeneID" id="828092"/>
<dbReference type="Gramene" id="AT4G03100.1">
    <property type="protein sequence ID" value="AT4G03100.1"/>
    <property type="gene ID" value="AT4G03100"/>
</dbReference>
<dbReference type="KEGG" id="ath:AT4G03100"/>
<dbReference type="Araport" id="AT4G03100"/>
<dbReference type="TAIR" id="AT4G03100"/>
<dbReference type="eggNOG" id="KOG4270">
    <property type="taxonomic scope" value="Eukaryota"/>
</dbReference>
<dbReference type="HOGENOM" id="CLU_031591_0_1_1"/>
<dbReference type="InParanoid" id="F4JI46"/>
<dbReference type="OMA" id="CRVDPPD"/>
<dbReference type="PRO" id="PR:F4JI46"/>
<dbReference type="Proteomes" id="UP000006548">
    <property type="component" value="Chromosome 4"/>
</dbReference>
<dbReference type="ExpressionAtlas" id="F4JI46">
    <property type="expression patterns" value="baseline and differential"/>
</dbReference>
<dbReference type="GO" id="GO:0005096">
    <property type="term" value="F:GTPase activator activity"/>
    <property type="evidence" value="ECO:0007669"/>
    <property type="project" value="UniProtKB-KW"/>
</dbReference>
<dbReference type="GO" id="GO:0007165">
    <property type="term" value="P:signal transduction"/>
    <property type="evidence" value="ECO:0007669"/>
    <property type="project" value="InterPro"/>
</dbReference>
<dbReference type="CDD" id="cd00132">
    <property type="entry name" value="CRIB"/>
    <property type="match status" value="1"/>
</dbReference>
<dbReference type="CDD" id="cd00159">
    <property type="entry name" value="RhoGAP"/>
    <property type="match status" value="1"/>
</dbReference>
<dbReference type="FunFam" id="1.10.555.10:FF:000046">
    <property type="entry name" value="Rho GTPase-activating protein 5"/>
    <property type="match status" value="1"/>
</dbReference>
<dbReference type="Gene3D" id="3.90.810.10">
    <property type="entry name" value="CRIB domain"/>
    <property type="match status" value="1"/>
</dbReference>
<dbReference type="Gene3D" id="1.10.555.10">
    <property type="entry name" value="Rho GTPase activation protein"/>
    <property type="match status" value="1"/>
</dbReference>
<dbReference type="InterPro" id="IPR000095">
    <property type="entry name" value="CRIB_dom"/>
</dbReference>
<dbReference type="InterPro" id="IPR036936">
    <property type="entry name" value="CRIB_dom_sf"/>
</dbReference>
<dbReference type="InterPro" id="IPR008936">
    <property type="entry name" value="Rho_GTPase_activation_prot"/>
</dbReference>
<dbReference type="InterPro" id="IPR000198">
    <property type="entry name" value="RhoGAP_dom"/>
</dbReference>
<dbReference type="InterPro" id="IPR044785">
    <property type="entry name" value="RopGAP1-5"/>
</dbReference>
<dbReference type="PANTHER" id="PTHR23177">
    <property type="entry name" value="MKIAA1688 PROTEIN"/>
    <property type="match status" value="1"/>
</dbReference>
<dbReference type="PANTHER" id="PTHR23177:SF35">
    <property type="entry name" value="RHO GTPASE-ACTIVATING PROTEIN GACA"/>
    <property type="match status" value="1"/>
</dbReference>
<dbReference type="Pfam" id="PF00786">
    <property type="entry name" value="PBD"/>
    <property type="match status" value="1"/>
</dbReference>
<dbReference type="Pfam" id="PF00620">
    <property type="entry name" value="RhoGAP"/>
    <property type="match status" value="1"/>
</dbReference>
<dbReference type="SMART" id="SM00285">
    <property type="entry name" value="PBD"/>
    <property type="match status" value="1"/>
</dbReference>
<dbReference type="SMART" id="SM00324">
    <property type="entry name" value="RhoGAP"/>
    <property type="match status" value="1"/>
</dbReference>
<dbReference type="SUPFAM" id="SSF48350">
    <property type="entry name" value="GTPase activation domain, GAP"/>
    <property type="match status" value="1"/>
</dbReference>
<dbReference type="PROSITE" id="PS50108">
    <property type="entry name" value="CRIB"/>
    <property type="match status" value="1"/>
</dbReference>
<dbReference type="PROSITE" id="PS50238">
    <property type="entry name" value="RHOGAP"/>
    <property type="match status" value="1"/>
</dbReference>
<protein>
    <recommendedName>
        <fullName>Rho GTPase-activating protein 2</fullName>
    </recommendedName>
    <alternativeName>
        <fullName>Rho-type GTPase-activating protein 2</fullName>
    </alternativeName>
</protein>
<proteinExistence type="evidence at protein level"/>
<feature type="chain" id="PRO_0000422717" description="Rho GTPase-activating protein 2">
    <location>
        <begin position="1"/>
        <end position="430"/>
    </location>
</feature>
<feature type="domain" description="CRIB" evidence="2">
    <location>
        <begin position="80"/>
        <end position="93"/>
    </location>
</feature>
<feature type="domain" description="Rho-GAP" evidence="3">
    <location>
        <begin position="125"/>
        <end position="310"/>
    </location>
</feature>
<feature type="region of interest" description="Disordered" evidence="4">
    <location>
        <begin position="1"/>
        <end position="36"/>
    </location>
</feature>
<feature type="region of interest" description="Disordered" evidence="4">
    <location>
        <begin position="307"/>
        <end position="372"/>
    </location>
</feature>
<feature type="compositionally biased region" description="Gly residues" evidence="4">
    <location>
        <begin position="9"/>
        <end position="18"/>
    </location>
</feature>
<feature type="compositionally biased region" description="Low complexity" evidence="4">
    <location>
        <begin position="316"/>
        <end position="326"/>
    </location>
</feature>
<feature type="compositionally biased region" description="Acidic residues" evidence="4">
    <location>
        <begin position="347"/>
        <end position="356"/>
    </location>
</feature>
<feature type="compositionally biased region" description="Basic and acidic residues" evidence="4">
    <location>
        <begin position="357"/>
        <end position="371"/>
    </location>
</feature>
<feature type="site" description="Arginine finger; crucial for GTP hydrolysis by stabilizing the transition state" evidence="3">
    <location>
        <position position="165"/>
    </location>
</feature>
<feature type="mutagenesis site" description="Reduces binding affinity with ARAC3/ROP7 10-fold." evidence="5">
    <original>H</original>
    <variation>A</variation>
    <location>
        <position position="88"/>
    </location>
</feature>
<feature type="mutagenesis site" description="Reduces binding affinity with ARAC3/ROP7 10-fold." evidence="5">
    <original>H</original>
    <variation>A</variation>
    <location>
        <position position="91"/>
    </location>
</feature>
<feature type="mutagenesis site" description="No effect on homodimerization and complex formation." evidence="5">
    <original>R</original>
    <variation>A</variation>
    <location>
        <position position="165"/>
    </location>
</feature>
<feature type="sequence conflict" description="In Ref. 3; BX826644." evidence="6" ref="3">
    <original>VSV</original>
    <variation>FSF</variation>
    <location>
        <begin position="120"/>
        <end position="122"/>
    </location>
</feature>
<feature type="sequence conflict" description="In Ref. 3; BX826644." evidence="6" ref="3">
    <original>S</original>
    <variation>R</variation>
    <location>
        <position position="427"/>
    </location>
</feature>
<reference key="1">
    <citation type="journal article" date="1999" name="Nature">
        <title>Sequence and analysis of chromosome 4 of the plant Arabidopsis thaliana.</title>
        <authorList>
            <person name="Mayer K.F.X."/>
            <person name="Schueller C."/>
            <person name="Wambutt R."/>
            <person name="Murphy G."/>
            <person name="Volckaert G."/>
            <person name="Pohl T."/>
            <person name="Duesterhoeft A."/>
            <person name="Stiekema W."/>
            <person name="Entian K.-D."/>
            <person name="Terryn N."/>
            <person name="Harris B."/>
            <person name="Ansorge W."/>
            <person name="Brandt P."/>
            <person name="Grivell L.A."/>
            <person name="Rieger M."/>
            <person name="Weichselgartner M."/>
            <person name="de Simone V."/>
            <person name="Obermaier B."/>
            <person name="Mache R."/>
            <person name="Mueller M."/>
            <person name="Kreis M."/>
            <person name="Delseny M."/>
            <person name="Puigdomenech P."/>
            <person name="Watson M."/>
            <person name="Schmidtheini T."/>
            <person name="Reichert B."/>
            <person name="Portetelle D."/>
            <person name="Perez-Alonso M."/>
            <person name="Boutry M."/>
            <person name="Bancroft I."/>
            <person name="Vos P."/>
            <person name="Hoheisel J."/>
            <person name="Zimmermann W."/>
            <person name="Wedler H."/>
            <person name="Ridley P."/>
            <person name="Langham S.-A."/>
            <person name="McCullagh B."/>
            <person name="Bilham L."/>
            <person name="Robben J."/>
            <person name="van der Schueren J."/>
            <person name="Grymonprez B."/>
            <person name="Chuang Y.-J."/>
            <person name="Vandenbussche F."/>
            <person name="Braeken M."/>
            <person name="Weltjens I."/>
            <person name="Voet M."/>
            <person name="Bastiaens I."/>
            <person name="Aert R."/>
            <person name="Defoor E."/>
            <person name="Weitzenegger T."/>
            <person name="Bothe G."/>
            <person name="Ramsperger U."/>
            <person name="Hilbert H."/>
            <person name="Braun M."/>
            <person name="Holzer E."/>
            <person name="Brandt A."/>
            <person name="Peters S."/>
            <person name="van Staveren M."/>
            <person name="Dirkse W."/>
            <person name="Mooijman P."/>
            <person name="Klein Lankhorst R."/>
            <person name="Rose M."/>
            <person name="Hauf J."/>
            <person name="Koetter P."/>
            <person name="Berneiser S."/>
            <person name="Hempel S."/>
            <person name="Feldpausch M."/>
            <person name="Lamberth S."/>
            <person name="Van den Daele H."/>
            <person name="De Keyser A."/>
            <person name="Buysshaert C."/>
            <person name="Gielen J."/>
            <person name="Villarroel R."/>
            <person name="De Clercq R."/>
            <person name="van Montagu M."/>
            <person name="Rogers J."/>
            <person name="Cronin A."/>
            <person name="Quail M.A."/>
            <person name="Bray-Allen S."/>
            <person name="Clark L."/>
            <person name="Doggett J."/>
            <person name="Hall S."/>
            <person name="Kay M."/>
            <person name="Lennard N."/>
            <person name="McLay K."/>
            <person name="Mayes R."/>
            <person name="Pettett A."/>
            <person name="Rajandream M.A."/>
            <person name="Lyne M."/>
            <person name="Benes V."/>
            <person name="Rechmann S."/>
            <person name="Borkova D."/>
            <person name="Bloecker H."/>
            <person name="Scharfe M."/>
            <person name="Grimm M."/>
            <person name="Loehnert T.-H."/>
            <person name="Dose S."/>
            <person name="de Haan M."/>
            <person name="Maarse A.C."/>
            <person name="Schaefer M."/>
            <person name="Mueller-Auer S."/>
            <person name="Gabel C."/>
            <person name="Fuchs M."/>
            <person name="Fartmann B."/>
            <person name="Granderath K."/>
            <person name="Dauner D."/>
            <person name="Herzl A."/>
            <person name="Neumann S."/>
            <person name="Argiriou A."/>
            <person name="Vitale D."/>
            <person name="Liguori R."/>
            <person name="Piravandi E."/>
            <person name="Massenet O."/>
            <person name="Quigley F."/>
            <person name="Clabauld G."/>
            <person name="Muendlein A."/>
            <person name="Felber R."/>
            <person name="Schnabl S."/>
            <person name="Hiller R."/>
            <person name="Schmidt W."/>
            <person name="Lecharny A."/>
            <person name="Aubourg S."/>
            <person name="Chefdor F."/>
            <person name="Cooke R."/>
            <person name="Berger C."/>
            <person name="Monfort A."/>
            <person name="Casacuberta E."/>
            <person name="Gibbons T."/>
            <person name="Weber N."/>
            <person name="Vandenbol M."/>
            <person name="Bargues M."/>
            <person name="Terol J."/>
            <person name="Torres A."/>
            <person name="Perez-Perez A."/>
            <person name="Purnelle B."/>
            <person name="Bent E."/>
            <person name="Johnson S."/>
            <person name="Tacon D."/>
            <person name="Jesse T."/>
            <person name="Heijnen L."/>
            <person name="Schwarz S."/>
            <person name="Scholler P."/>
            <person name="Heber S."/>
            <person name="Francs P."/>
            <person name="Bielke C."/>
            <person name="Frishman D."/>
            <person name="Haase D."/>
            <person name="Lemcke K."/>
            <person name="Mewes H.-W."/>
            <person name="Stocker S."/>
            <person name="Zaccaria P."/>
            <person name="Bevan M."/>
            <person name="Wilson R.K."/>
            <person name="de la Bastide M."/>
            <person name="Habermann K."/>
            <person name="Parnell L."/>
            <person name="Dedhia N."/>
            <person name="Gnoj L."/>
            <person name="Schutz K."/>
            <person name="Huang E."/>
            <person name="Spiegel L."/>
            <person name="Sekhon M."/>
            <person name="Murray J."/>
            <person name="Sheet P."/>
            <person name="Cordes M."/>
            <person name="Abu-Threideh J."/>
            <person name="Stoneking T."/>
            <person name="Kalicki J."/>
            <person name="Graves T."/>
            <person name="Harmon G."/>
            <person name="Edwards J."/>
            <person name="Latreille P."/>
            <person name="Courtney L."/>
            <person name="Cloud J."/>
            <person name="Abbott A."/>
            <person name="Scott K."/>
            <person name="Johnson D."/>
            <person name="Minx P."/>
            <person name="Bentley D."/>
            <person name="Fulton B."/>
            <person name="Miller N."/>
            <person name="Greco T."/>
            <person name="Kemp K."/>
            <person name="Kramer J."/>
            <person name="Fulton L."/>
            <person name="Mardis E."/>
            <person name="Dante M."/>
            <person name="Pepin K."/>
            <person name="Hillier L.W."/>
            <person name="Nelson J."/>
            <person name="Spieth J."/>
            <person name="Ryan E."/>
            <person name="Andrews S."/>
            <person name="Geisel C."/>
            <person name="Layman D."/>
            <person name="Du H."/>
            <person name="Ali J."/>
            <person name="Berghoff A."/>
            <person name="Jones K."/>
            <person name="Drone K."/>
            <person name="Cotton M."/>
            <person name="Joshu C."/>
            <person name="Antonoiu B."/>
            <person name="Zidanic M."/>
            <person name="Strong C."/>
            <person name="Sun H."/>
            <person name="Lamar B."/>
            <person name="Yordan C."/>
            <person name="Ma P."/>
            <person name="Zhong J."/>
            <person name="Preston R."/>
            <person name="Vil D."/>
            <person name="Shekher M."/>
            <person name="Matero A."/>
            <person name="Shah R."/>
            <person name="Swaby I.K."/>
            <person name="O'Shaughnessy A."/>
            <person name="Rodriguez M."/>
            <person name="Hoffman J."/>
            <person name="Till S."/>
            <person name="Granat S."/>
            <person name="Shohdy N."/>
            <person name="Hasegawa A."/>
            <person name="Hameed A."/>
            <person name="Lodhi M."/>
            <person name="Johnson A."/>
            <person name="Chen E."/>
            <person name="Marra M.A."/>
            <person name="Martienssen R."/>
            <person name="McCombie W.R."/>
        </authorList>
    </citation>
    <scope>NUCLEOTIDE SEQUENCE [LARGE SCALE GENOMIC DNA]</scope>
    <source>
        <strain>cv. Columbia</strain>
    </source>
</reference>
<reference key="2">
    <citation type="journal article" date="2017" name="Plant J.">
        <title>Araport11: a complete reannotation of the Arabidopsis thaliana reference genome.</title>
        <authorList>
            <person name="Cheng C.Y."/>
            <person name="Krishnakumar V."/>
            <person name="Chan A.P."/>
            <person name="Thibaud-Nissen F."/>
            <person name="Schobel S."/>
            <person name="Town C.D."/>
        </authorList>
    </citation>
    <scope>GENOME REANNOTATION</scope>
    <source>
        <strain>cv. Columbia</strain>
    </source>
</reference>
<reference key="3">
    <citation type="journal article" date="2004" name="Genome Res.">
        <title>Whole genome sequence comparisons and 'full-length' cDNA sequences: a combined approach to evaluate and improve Arabidopsis genome annotation.</title>
        <authorList>
            <person name="Castelli V."/>
            <person name="Aury J.-M."/>
            <person name="Jaillon O."/>
            <person name="Wincker P."/>
            <person name="Clepet C."/>
            <person name="Menard M."/>
            <person name="Cruaud C."/>
            <person name="Quetier F."/>
            <person name="Scarpelli C."/>
            <person name="Schaechter V."/>
            <person name="Temple G."/>
            <person name="Caboche M."/>
            <person name="Weissenbach J."/>
            <person name="Salanoubat M."/>
        </authorList>
    </citation>
    <scope>NUCLEOTIDE SEQUENCE [LARGE SCALE MRNA]</scope>
    <source>
        <strain>cv. Columbia</strain>
    </source>
</reference>
<reference key="4">
    <citation type="journal article" date="2011" name="Biopolymers">
        <title>The unique plant RhoGAPs are dimeric and contain a CRIB motif required for affinity and specificity towards cognate small G proteins.</title>
        <authorList>
            <person name="Schaefer A."/>
            <person name="Hoehner K."/>
            <person name="Berken A."/>
            <person name="Wittinghofer A."/>
        </authorList>
    </citation>
    <scope>SUBUNIT</scope>
    <scope>MUTAGENESIS OF HIS-88; HIS-91 AND ARG-165</scope>
</reference>
<sequence>MTGLVMMTKGGGCGGGGKGGRRKSTAEEEEEEEQNQQQLSLVEFLLTALRKSVVSCRVDNRQDDGGVGGGISSAVHHMEIGWPTNVRHITHVTFDRFHGFLGLPHELQVEIPCRVPSASVSVFGVSAESMQCSYDEKGNSVPTILLLMQERLYSQQGLKAEGIFRINPENSQEEHVRDQLNRGIVPENIDVHCLAGLIKAWFRELPSGVLDGLSPEEVLNCNTEDESVELIKQLKPTESALLNWAVDLMADVVEEEESNKMNARNIAMVFAPNMTQMTDPLTALMHAVQVMNLLKTLITKTLAEREENATGSEGYSPSHSSNSQTDSDSDNAQDMEVSCESQATDSECGEEEEVEEVEQHQEHLSRHSTHEDETDIGSLCSIEKCFLNQLNNNAARVSNTSISEDWSPKAFPLVSFTENKSNTLSSSTSD</sequence>
<accession>F4JI46</accession>
<accession>Q9ZNR7</accession>
<organism>
    <name type="scientific">Arabidopsis thaliana</name>
    <name type="common">Mouse-ear cress</name>
    <dbReference type="NCBI Taxonomy" id="3702"/>
    <lineage>
        <taxon>Eukaryota</taxon>
        <taxon>Viridiplantae</taxon>
        <taxon>Streptophyta</taxon>
        <taxon>Embryophyta</taxon>
        <taxon>Tracheophyta</taxon>
        <taxon>Spermatophyta</taxon>
        <taxon>Magnoliopsida</taxon>
        <taxon>eudicotyledons</taxon>
        <taxon>Gunneridae</taxon>
        <taxon>Pentapetalae</taxon>
        <taxon>rosids</taxon>
        <taxon>malvids</taxon>
        <taxon>Brassicales</taxon>
        <taxon>Brassicaceae</taxon>
        <taxon>Camelineae</taxon>
        <taxon>Arabidopsis</taxon>
    </lineage>
</organism>
<evidence type="ECO:0000250" key="1"/>
<evidence type="ECO:0000255" key="2">
    <source>
        <dbReference type="PROSITE-ProRule" id="PRU00057"/>
    </source>
</evidence>
<evidence type="ECO:0000255" key="3">
    <source>
        <dbReference type="PROSITE-ProRule" id="PRU00172"/>
    </source>
</evidence>
<evidence type="ECO:0000256" key="4">
    <source>
        <dbReference type="SAM" id="MobiDB-lite"/>
    </source>
</evidence>
<evidence type="ECO:0000269" key="5">
    <source>
    </source>
</evidence>
<evidence type="ECO:0000305" key="6"/>
<name>RGAP2_ARATH</name>
<gene>
    <name type="primary">ROPGAP2</name>
    <name type="ordered locus">At4g03100</name>
    <name type="ORF">F4C21.2</name>
    <name type="ORF">T4I9.2</name>
</gene>
<comment type="function">
    <text evidence="1">Acts as a GTPase activator for the Rac-type GTPase by converting it to an inactive GDP-bound state.</text>
</comment>
<comment type="subunit">
    <text evidence="5">Homodimerizes via its Rho-GAP domain and forms a tetrameric complex (2:2) with ARAC1/ROP3, ARAC2/ROP7, ARAC4/ROP2, ARAC5/ROP4, ARAC7/ROP9 or ARAC11/ROP1.</text>
</comment>
<comment type="sequence caution" evidence="6">
    <conflict type="erroneous initiation">
        <sequence resource="EMBL-CDS" id="AAC79102"/>
    </conflict>
    <text>Truncated N-terminus.</text>
</comment>
<comment type="sequence caution" evidence="6">
    <conflict type="erroneous initiation">
        <sequence resource="EMBL-CDS" id="AAD14438"/>
    </conflict>
    <text>Truncated N-terminus.</text>
</comment>
<comment type="sequence caution" evidence="6">
    <conflict type="erroneous initiation">
        <sequence resource="EMBL-CDS" id="CAB77795"/>
    </conflict>
    <text>Truncated N-terminus.</text>
</comment>